<feature type="chain" id="PRO_0000315621" description="Exonuclease 1">
    <location>
        <begin position="1"/>
        <end position="836"/>
    </location>
</feature>
<feature type="region of interest" description="N-domain">
    <location>
        <begin position="1"/>
        <end position="99"/>
    </location>
</feature>
<feature type="region of interest" description="Disordered" evidence="2">
    <location>
        <begin position="82"/>
        <end position="108"/>
    </location>
</feature>
<feature type="region of interest" description="I-domain">
    <location>
        <begin position="138"/>
        <end position="230"/>
    </location>
</feature>
<feature type="region of interest" description="Disordered" evidence="2">
    <location>
        <begin position="464"/>
        <end position="488"/>
    </location>
</feature>
<feature type="region of interest" description="Disordered" evidence="2">
    <location>
        <begin position="568"/>
        <end position="641"/>
    </location>
</feature>
<feature type="region of interest" description="Disordered" evidence="2">
    <location>
        <begin position="744"/>
        <end position="836"/>
    </location>
</feature>
<feature type="compositionally biased region" description="Basic and acidic residues" evidence="2">
    <location>
        <begin position="84"/>
        <end position="108"/>
    </location>
</feature>
<feature type="compositionally biased region" description="Acidic residues" evidence="2">
    <location>
        <begin position="568"/>
        <end position="577"/>
    </location>
</feature>
<feature type="compositionally biased region" description="Polar residues" evidence="2">
    <location>
        <begin position="578"/>
        <end position="592"/>
    </location>
</feature>
<feature type="compositionally biased region" description="Polar residues" evidence="2">
    <location>
        <begin position="744"/>
        <end position="758"/>
    </location>
</feature>
<feature type="binding site" evidence="1">
    <location>
        <position position="30"/>
    </location>
    <ligand>
        <name>Mg(2+)</name>
        <dbReference type="ChEBI" id="CHEBI:18420"/>
        <label>1</label>
    </ligand>
</feature>
<feature type="binding site" evidence="1">
    <location>
        <position position="78"/>
    </location>
    <ligand>
        <name>Mg(2+)</name>
        <dbReference type="ChEBI" id="CHEBI:18420"/>
        <label>1</label>
    </ligand>
</feature>
<feature type="binding site" evidence="1">
    <location>
        <position position="150"/>
    </location>
    <ligand>
        <name>Mg(2+)</name>
        <dbReference type="ChEBI" id="CHEBI:18420"/>
        <label>1</label>
    </ligand>
</feature>
<feature type="binding site" evidence="1">
    <location>
        <position position="152"/>
    </location>
    <ligand>
        <name>Mg(2+)</name>
        <dbReference type="ChEBI" id="CHEBI:18420"/>
        <label>1</label>
    </ligand>
</feature>
<feature type="binding site" evidence="1">
    <location>
        <position position="171"/>
    </location>
    <ligand>
        <name>Mg(2+)</name>
        <dbReference type="ChEBI" id="CHEBI:18420"/>
        <label>2</label>
    </ligand>
</feature>
<feature type="binding site" evidence="1">
    <location>
        <position position="173"/>
    </location>
    <ligand>
        <name>Mg(2+)</name>
        <dbReference type="ChEBI" id="CHEBI:18420"/>
        <label>2</label>
    </ligand>
</feature>
<feature type="binding site" evidence="1">
    <location>
        <position position="226"/>
    </location>
    <ligand>
        <name>Mg(2+)</name>
        <dbReference type="ChEBI" id="CHEBI:18420"/>
        <label>2</label>
    </ligand>
</feature>
<protein>
    <recommendedName>
        <fullName>Exonuclease 1</fullName>
        <ecNumber>3.1.-.-</ecNumber>
    </recommendedName>
    <alternativeName>
        <fullName>OsEXO-1</fullName>
    </alternativeName>
</protein>
<gene>
    <name type="primary">EXO1</name>
    <name type="ordered locus">Os01g0777300</name>
    <name type="ordered locus">LOC_Os01g56940</name>
    <name type="ORF">P0413G02.29</name>
</gene>
<comment type="function">
    <text evidence="1">Putative 5'-&gt;3' double-stranded DNA exonuclease which may also contain a cryptic 3'-&gt;5' double-stranded DNA exonuclease activity. May be involved in DNA mismatch repair (MMR) (By similarity).</text>
</comment>
<comment type="cofactor">
    <cofactor evidence="1">
        <name>Mg(2+)</name>
        <dbReference type="ChEBI" id="CHEBI:18420"/>
    </cofactor>
    <text evidence="1">Binds 2 magnesium ions per subunit. They probably participate in the reaction catalyzed by the enzyme. May bind an additional third magnesium ion after substrate binding.</text>
</comment>
<comment type="subcellular location">
    <subcellularLocation>
        <location evidence="1">Nucleus</location>
    </subcellularLocation>
</comment>
<comment type="similarity">
    <text evidence="3">Belongs to the XPG/RAD2 endonuclease family. EXO1 subfamily.</text>
</comment>
<comment type="sequence caution" evidence="3">
    <conflict type="erroneous gene model prediction">
        <sequence resource="EMBL-CDS" id="BAD53243"/>
    </conflict>
</comment>
<name>EXO1_ORYSJ</name>
<reference key="1">
    <citation type="submission" date="2004-05" db="EMBL/GenBank/DDBJ databases">
        <title>Oryza sativa OsEXO-1 gene for Exonuclease-1, complete cds.</title>
        <authorList>
            <person name="Furukawa T."/>
            <person name="Shimada H."/>
        </authorList>
    </citation>
    <scope>NUCLEOTIDE SEQUENCE [MRNA]</scope>
    <source>
        <strain>cv. Nipponbare</strain>
    </source>
</reference>
<reference key="2">
    <citation type="journal article" date="2002" name="Nature">
        <title>The genome sequence and structure of rice chromosome 1.</title>
        <authorList>
            <person name="Sasaki T."/>
            <person name="Matsumoto T."/>
            <person name="Yamamoto K."/>
            <person name="Sakata K."/>
            <person name="Baba T."/>
            <person name="Katayose Y."/>
            <person name="Wu J."/>
            <person name="Niimura Y."/>
            <person name="Cheng Z."/>
            <person name="Nagamura Y."/>
            <person name="Antonio B.A."/>
            <person name="Kanamori H."/>
            <person name="Hosokawa S."/>
            <person name="Masukawa M."/>
            <person name="Arikawa K."/>
            <person name="Chiden Y."/>
            <person name="Hayashi M."/>
            <person name="Okamoto M."/>
            <person name="Ando T."/>
            <person name="Aoki H."/>
            <person name="Arita K."/>
            <person name="Hamada M."/>
            <person name="Harada C."/>
            <person name="Hijishita S."/>
            <person name="Honda M."/>
            <person name="Ichikawa Y."/>
            <person name="Idonuma A."/>
            <person name="Iijima M."/>
            <person name="Ikeda M."/>
            <person name="Ikeno M."/>
            <person name="Ito S."/>
            <person name="Ito T."/>
            <person name="Ito Y."/>
            <person name="Ito Y."/>
            <person name="Iwabuchi A."/>
            <person name="Kamiya K."/>
            <person name="Karasawa W."/>
            <person name="Katagiri S."/>
            <person name="Kikuta A."/>
            <person name="Kobayashi N."/>
            <person name="Kono I."/>
            <person name="Machita K."/>
            <person name="Maehara T."/>
            <person name="Mizuno H."/>
            <person name="Mizubayashi T."/>
            <person name="Mukai Y."/>
            <person name="Nagasaki H."/>
            <person name="Nakashima M."/>
            <person name="Nakama Y."/>
            <person name="Nakamichi Y."/>
            <person name="Nakamura M."/>
            <person name="Namiki N."/>
            <person name="Negishi M."/>
            <person name="Ohta I."/>
            <person name="Ono N."/>
            <person name="Saji S."/>
            <person name="Sakai K."/>
            <person name="Shibata M."/>
            <person name="Shimokawa T."/>
            <person name="Shomura A."/>
            <person name="Song J."/>
            <person name="Takazaki Y."/>
            <person name="Terasawa K."/>
            <person name="Tsuji K."/>
            <person name="Waki K."/>
            <person name="Yamagata H."/>
            <person name="Yamane H."/>
            <person name="Yoshiki S."/>
            <person name="Yoshihara R."/>
            <person name="Yukawa K."/>
            <person name="Zhong H."/>
            <person name="Iwama H."/>
            <person name="Endo T."/>
            <person name="Ito H."/>
            <person name="Hahn J.H."/>
            <person name="Kim H.-I."/>
            <person name="Eun M.-Y."/>
            <person name="Yano M."/>
            <person name="Jiang J."/>
            <person name="Gojobori T."/>
        </authorList>
    </citation>
    <scope>NUCLEOTIDE SEQUENCE [LARGE SCALE GENOMIC DNA]</scope>
    <source>
        <strain>cv. Nipponbare</strain>
    </source>
</reference>
<reference key="3">
    <citation type="journal article" date="2005" name="Nature">
        <title>The map-based sequence of the rice genome.</title>
        <authorList>
            <consortium name="International rice genome sequencing project (IRGSP)"/>
        </authorList>
    </citation>
    <scope>NUCLEOTIDE SEQUENCE [LARGE SCALE GENOMIC DNA]</scope>
    <source>
        <strain>cv. Nipponbare</strain>
    </source>
</reference>
<reference key="4">
    <citation type="journal article" date="2008" name="Nucleic Acids Res.">
        <title>The rice annotation project database (RAP-DB): 2008 update.</title>
        <authorList>
            <consortium name="The rice annotation project (RAP)"/>
        </authorList>
    </citation>
    <scope>GENOME REANNOTATION</scope>
    <source>
        <strain>cv. Nipponbare</strain>
    </source>
</reference>
<reference key="5">
    <citation type="journal article" date="2013" name="Rice">
        <title>Improvement of the Oryza sativa Nipponbare reference genome using next generation sequence and optical map data.</title>
        <authorList>
            <person name="Kawahara Y."/>
            <person name="de la Bastide M."/>
            <person name="Hamilton J.P."/>
            <person name="Kanamori H."/>
            <person name="McCombie W.R."/>
            <person name="Ouyang S."/>
            <person name="Schwartz D.C."/>
            <person name="Tanaka T."/>
            <person name="Wu J."/>
            <person name="Zhou S."/>
            <person name="Childs K.L."/>
            <person name="Davidson R.M."/>
            <person name="Lin H."/>
            <person name="Quesada-Ocampo L."/>
            <person name="Vaillancourt B."/>
            <person name="Sakai H."/>
            <person name="Lee S.S."/>
            <person name="Kim J."/>
            <person name="Numa H."/>
            <person name="Itoh T."/>
            <person name="Buell C.R."/>
            <person name="Matsumoto T."/>
        </authorList>
    </citation>
    <scope>GENOME REANNOTATION</scope>
    <source>
        <strain>cv. Nipponbare</strain>
    </source>
</reference>
<dbReference type="EC" id="3.1.-.-"/>
<dbReference type="EMBL" id="AB179769">
    <property type="protein sequence ID" value="BAD60834.1"/>
    <property type="molecule type" value="mRNA"/>
</dbReference>
<dbReference type="EMBL" id="AP003344">
    <property type="protein sequence ID" value="BAD53243.1"/>
    <property type="status" value="ALT_SEQ"/>
    <property type="molecule type" value="Genomic_DNA"/>
</dbReference>
<dbReference type="EMBL" id="AP008207">
    <property type="protein sequence ID" value="BAF06335.2"/>
    <property type="molecule type" value="Genomic_DNA"/>
</dbReference>
<dbReference type="EMBL" id="AP014957">
    <property type="protein sequence ID" value="BAS74613.1"/>
    <property type="molecule type" value="Genomic_DNA"/>
</dbReference>
<dbReference type="RefSeq" id="XP_015612001.1">
    <property type="nucleotide sequence ID" value="XM_015756515.1"/>
</dbReference>
<dbReference type="RefSeq" id="XP_015612007.1">
    <property type="nucleotide sequence ID" value="XM_015756521.1"/>
</dbReference>
<dbReference type="SMR" id="Q60GC1"/>
<dbReference type="FunCoup" id="Q60GC1">
    <property type="interactions" value="95"/>
</dbReference>
<dbReference type="STRING" id="39947.Q60GC1"/>
<dbReference type="PaxDb" id="39947-Q60GC1"/>
<dbReference type="EnsemblPlants" id="Os01t0777300-01">
    <property type="protein sequence ID" value="Os01t0777300-01"/>
    <property type="gene ID" value="Os01g0777300"/>
</dbReference>
<dbReference type="Gramene" id="Os01t0777300-01">
    <property type="protein sequence ID" value="Os01t0777300-01"/>
    <property type="gene ID" value="Os01g0777300"/>
</dbReference>
<dbReference type="KEGG" id="dosa:Os01g0777300"/>
<dbReference type="eggNOG" id="KOG2518">
    <property type="taxonomic scope" value="Eukaryota"/>
</dbReference>
<dbReference type="HOGENOM" id="CLU_008978_4_0_1"/>
<dbReference type="InParanoid" id="Q60GC1"/>
<dbReference type="OMA" id="RKAIWAF"/>
<dbReference type="OrthoDB" id="26491at2759"/>
<dbReference type="BRENDA" id="3.1.11.1">
    <property type="organism ID" value="4460"/>
</dbReference>
<dbReference type="Proteomes" id="UP000000763">
    <property type="component" value="Chromosome 1"/>
</dbReference>
<dbReference type="Proteomes" id="UP000059680">
    <property type="component" value="Chromosome 1"/>
</dbReference>
<dbReference type="GO" id="GO:0005634">
    <property type="term" value="C:nucleus"/>
    <property type="evidence" value="ECO:0007669"/>
    <property type="project" value="UniProtKB-SubCell"/>
</dbReference>
<dbReference type="GO" id="GO:0035312">
    <property type="term" value="F:5'-3' DNA exonuclease activity"/>
    <property type="evidence" value="ECO:0007669"/>
    <property type="project" value="InterPro"/>
</dbReference>
<dbReference type="GO" id="GO:0017108">
    <property type="term" value="F:5'-flap endonuclease activity"/>
    <property type="evidence" value="ECO:0000318"/>
    <property type="project" value="GO_Central"/>
</dbReference>
<dbReference type="GO" id="GO:0003677">
    <property type="term" value="F:DNA binding"/>
    <property type="evidence" value="ECO:0007669"/>
    <property type="project" value="UniProtKB-KW"/>
</dbReference>
<dbReference type="GO" id="GO:0046872">
    <property type="term" value="F:metal ion binding"/>
    <property type="evidence" value="ECO:0007669"/>
    <property type="project" value="UniProtKB-KW"/>
</dbReference>
<dbReference type="GO" id="GO:0032183">
    <property type="term" value="F:SUMO binding"/>
    <property type="evidence" value="ECO:0007669"/>
    <property type="project" value="EnsemblPlants"/>
</dbReference>
<dbReference type="GO" id="GO:0006281">
    <property type="term" value="P:DNA repair"/>
    <property type="evidence" value="ECO:0007669"/>
    <property type="project" value="UniProtKB-KW"/>
</dbReference>
<dbReference type="CDD" id="cd09908">
    <property type="entry name" value="H3TH_EXO1"/>
    <property type="match status" value="1"/>
</dbReference>
<dbReference type="CDD" id="cd09857">
    <property type="entry name" value="PIN_EXO1"/>
    <property type="match status" value="1"/>
</dbReference>
<dbReference type="FunFam" id="1.10.150.20:FF:000011">
    <property type="entry name" value="exonuclease 1"/>
    <property type="match status" value="1"/>
</dbReference>
<dbReference type="FunFam" id="3.40.50.1010:FF:000002">
    <property type="entry name" value="Exonuclease 1, putative"/>
    <property type="match status" value="1"/>
</dbReference>
<dbReference type="Gene3D" id="1.10.150.20">
    <property type="entry name" value="5' to 3' exonuclease, C-terminal subdomain"/>
    <property type="match status" value="1"/>
</dbReference>
<dbReference type="Gene3D" id="3.40.50.1010">
    <property type="entry name" value="5'-nuclease"/>
    <property type="match status" value="1"/>
</dbReference>
<dbReference type="InterPro" id="IPR036279">
    <property type="entry name" value="5-3_exonuclease_C_sf"/>
</dbReference>
<dbReference type="InterPro" id="IPR037315">
    <property type="entry name" value="EXO1_H3TH"/>
</dbReference>
<dbReference type="InterPro" id="IPR008918">
    <property type="entry name" value="HhH2"/>
</dbReference>
<dbReference type="InterPro" id="IPR029060">
    <property type="entry name" value="PIN-like_dom_sf"/>
</dbReference>
<dbReference type="InterPro" id="IPR044752">
    <property type="entry name" value="PIN-like_EXO1"/>
</dbReference>
<dbReference type="InterPro" id="IPR006086">
    <property type="entry name" value="XPG-I_dom"/>
</dbReference>
<dbReference type="InterPro" id="IPR006084">
    <property type="entry name" value="XPG/Rad2"/>
</dbReference>
<dbReference type="InterPro" id="IPR019974">
    <property type="entry name" value="XPG_CS"/>
</dbReference>
<dbReference type="InterPro" id="IPR006085">
    <property type="entry name" value="XPG_DNA_repair_N"/>
</dbReference>
<dbReference type="PANTHER" id="PTHR11081:SF65">
    <property type="entry name" value="DNA DAMAGE-INDUCIBLE PROTEIN DIN7-RELATED"/>
    <property type="match status" value="1"/>
</dbReference>
<dbReference type="PANTHER" id="PTHR11081">
    <property type="entry name" value="FLAP ENDONUCLEASE FAMILY MEMBER"/>
    <property type="match status" value="1"/>
</dbReference>
<dbReference type="Pfam" id="PF00867">
    <property type="entry name" value="XPG_I"/>
    <property type="match status" value="1"/>
</dbReference>
<dbReference type="Pfam" id="PF00752">
    <property type="entry name" value="XPG_N"/>
    <property type="match status" value="1"/>
</dbReference>
<dbReference type="PRINTS" id="PR00853">
    <property type="entry name" value="XPGRADSUPER"/>
</dbReference>
<dbReference type="SMART" id="SM00279">
    <property type="entry name" value="HhH2"/>
    <property type="match status" value="1"/>
</dbReference>
<dbReference type="SMART" id="SM00484">
    <property type="entry name" value="XPGI"/>
    <property type="match status" value="1"/>
</dbReference>
<dbReference type="SMART" id="SM00485">
    <property type="entry name" value="XPGN"/>
    <property type="match status" value="1"/>
</dbReference>
<dbReference type="SUPFAM" id="SSF47807">
    <property type="entry name" value="5' to 3' exonuclease, C-terminal subdomain"/>
    <property type="match status" value="1"/>
</dbReference>
<dbReference type="SUPFAM" id="SSF88723">
    <property type="entry name" value="PIN domain-like"/>
    <property type="match status" value="1"/>
</dbReference>
<dbReference type="PROSITE" id="PS00841">
    <property type="entry name" value="XPG_1"/>
    <property type="match status" value="1"/>
</dbReference>
<keyword id="KW-0227">DNA damage</keyword>
<keyword id="KW-0228">DNA excision</keyword>
<keyword id="KW-0234">DNA repair</keyword>
<keyword id="KW-0238">DNA-binding</keyword>
<keyword id="KW-0255">Endonuclease</keyword>
<keyword id="KW-0267">Excision nuclease</keyword>
<keyword id="KW-0269">Exonuclease</keyword>
<keyword id="KW-0378">Hydrolase</keyword>
<keyword id="KW-0460">Magnesium</keyword>
<keyword id="KW-0479">Metal-binding</keyword>
<keyword id="KW-0540">Nuclease</keyword>
<keyword id="KW-0539">Nucleus</keyword>
<keyword id="KW-1185">Reference proteome</keyword>
<organism>
    <name type="scientific">Oryza sativa subsp. japonica</name>
    <name type="common">Rice</name>
    <dbReference type="NCBI Taxonomy" id="39947"/>
    <lineage>
        <taxon>Eukaryota</taxon>
        <taxon>Viridiplantae</taxon>
        <taxon>Streptophyta</taxon>
        <taxon>Embryophyta</taxon>
        <taxon>Tracheophyta</taxon>
        <taxon>Spermatophyta</taxon>
        <taxon>Magnoliopsida</taxon>
        <taxon>Liliopsida</taxon>
        <taxon>Poales</taxon>
        <taxon>Poaceae</taxon>
        <taxon>BOP clade</taxon>
        <taxon>Oryzoideae</taxon>
        <taxon>Oryzeae</taxon>
        <taxon>Oryzinae</taxon>
        <taxon>Oryza</taxon>
        <taxon>Oryza sativa</taxon>
    </lineage>
</organism>
<accession>Q60GC1</accession>
<accession>A0A0P0V8U2</accession>
<accession>Q5ZAZ7</accession>
<proteinExistence type="evidence at transcript level"/>
<evidence type="ECO:0000250" key="1"/>
<evidence type="ECO:0000256" key="2">
    <source>
        <dbReference type="SAM" id="MobiDB-lite"/>
    </source>
</evidence>
<evidence type="ECO:0000305" key="3"/>
<sequence length="836" mass="92248">MGIQGLLPQLKSIMAPIGVEALKGQTVAVDTYSWLHKGALSCGDRLCKGLPTTRHIEYCMHRVNMLRHHGVKPILVFDGGHLPMKGDQETKRERSRKENLERAKEHESAGNSRAAFECYQKAVDITPRIAFELIQVLKQEKVDYIVAPYEADAQMTFLSVNKLVDAVITEDSDLIPFGCSRIIFKMDKFGQGVEFHITRLQRCRELDLNGFTMQMLLEMCILSGCDYLPSLPGMGVKRAHALIQKLKGHEKVIKHLRYSAVSVPPQYEENFRKAIWAFQFQRVYDPVTEDIVHLSGIPHGSSEDLDFLGPWLPQTVAKGIAQGNIDPITKEPFEGKTESSALAFDKVHLNRESSAPSNGKKKLDLPVQRNVLTNYFCLASLEAKRKFRAPKVTPKQQVLNGSLPSPRIEDSGTPDLIEDTSLPSNNIQVYQCSSEHFSSGTPLDDSINTASQCSSERVRCDIPRDDSASVSPQCSHDIGSDPAEDPDIEGNKVKVNFCNRSTIPTGSFLEGTLPGISDPFLDSHNTEPSRAAPRYAEKSNVVSANRNITVRSSYFKTVNKRVCTNQGEDECHDEDNCETGNYTLPGDQQRSSGGILKRRKFSDPQNFEDGMFQPTSPHESPPVADKGCDSDSHDGINTNSEGKFGCNVAHVNKYSGIAEKSMDKFAALISSFRYAGSRASGLRAPLKDVKNTLPVRSVLRPPEQRFGCTAKKTTRVPLQSRFSSDATNSTDVPDLSTFAYRPTTASAHSDQGKITSKATDAAAGPPDLRTFAYAPTRSTTSRFDQSENTRKAMCTADSPPDISTFEYKPMKSAVRRSDGSKFSGAALKAARRTSRS</sequence>